<evidence type="ECO:0000255" key="1">
    <source>
        <dbReference type="HAMAP-Rule" id="MF_00657"/>
    </source>
</evidence>
<keyword id="KW-0223">Dioxygenase</keyword>
<keyword id="KW-0408">Iron</keyword>
<keyword id="KW-0479">Metal-binding</keyword>
<keyword id="KW-0560">Oxidoreductase</keyword>
<keyword id="KW-0847">Vitamin C</keyword>
<feature type="chain" id="PRO_0000346499" description="PKHD-type hydroxylase A9601_13531">
    <location>
        <begin position="1"/>
        <end position="221"/>
    </location>
</feature>
<feature type="domain" description="Fe2OG dioxygenase" evidence="1">
    <location>
        <begin position="80"/>
        <end position="174"/>
    </location>
</feature>
<feature type="binding site" evidence="1">
    <location>
        <position position="98"/>
    </location>
    <ligand>
        <name>Fe cation</name>
        <dbReference type="ChEBI" id="CHEBI:24875"/>
    </ligand>
</feature>
<feature type="binding site" evidence="1">
    <location>
        <position position="100"/>
    </location>
    <ligand>
        <name>Fe cation</name>
        <dbReference type="ChEBI" id="CHEBI:24875"/>
    </ligand>
</feature>
<feature type="binding site" evidence="1">
    <location>
        <position position="155"/>
    </location>
    <ligand>
        <name>Fe cation</name>
        <dbReference type="ChEBI" id="CHEBI:24875"/>
    </ligand>
</feature>
<feature type="binding site" evidence="1">
    <location>
        <position position="165"/>
    </location>
    <ligand>
        <name>2-oxoglutarate</name>
        <dbReference type="ChEBI" id="CHEBI:16810"/>
    </ligand>
</feature>
<proteinExistence type="inferred from homology"/>
<organism>
    <name type="scientific">Prochlorococcus marinus (strain AS9601)</name>
    <dbReference type="NCBI Taxonomy" id="146891"/>
    <lineage>
        <taxon>Bacteria</taxon>
        <taxon>Bacillati</taxon>
        <taxon>Cyanobacteriota</taxon>
        <taxon>Cyanophyceae</taxon>
        <taxon>Synechococcales</taxon>
        <taxon>Prochlorococcaceae</taxon>
        <taxon>Prochlorococcus</taxon>
    </lineage>
</organism>
<sequence length="221" mass="24962">MNYLTSQLLINEEIETINNNLKNQSDLWEDGKKTAGSYASKVKNNLQINRNSELSKKLAELIKNKLLANPLIKSFALPKLIHGIMFTKSQKNMGYGRHVDNPFMSSGRSDLSFTISLTPKDLYEGGELIIETINSENKFKLNAGEIIIYPSTYLHSVEKILSGERIVCVGWIESYVKSIEKREYLFDLDAGAKGLLAKHGRSDELDLIFKSYSNLLRLLGN</sequence>
<name>Y1353_PROMS</name>
<reference key="1">
    <citation type="journal article" date="2007" name="PLoS Genet.">
        <title>Patterns and implications of gene gain and loss in the evolution of Prochlorococcus.</title>
        <authorList>
            <person name="Kettler G.C."/>
            <person name="Martiny A.C."/>
            <person name="Huang K."/>
            <person name="Zucker J."/>
            <person name="Coleman M.L."/>
            <person name="Rodrigue S."/>
            <person name="Chen F."/>
            <person name="Lapidus A."/>
            <person name="Ferriera S."/>
            <person name="Johnson J."/>
            <person name="Steglich C."/>
            <person name="Church G.M."/>
            <person name="Richardson P."/>
            <person name="Chisholm S.W."/>
        </authorList>
    </citation>
    <scope>NUCLEOTIDE SEQUENCE [LARGE SCALE GENOMIC DNA]</scope>
    <source>
        <strain>AS9601</strain>
    </source>
</reference>
<dbReference type="EC" id="1.14.11.-" evidence="1"/>
<dbReference type="EMBL" id="CP000551">
    <property type="protein sequence ID" value="ABM70637.1"/>
    <property type="molecule type" value="Genomic_DNA"/>
</dbReference>
<dbReference type="RefSeq" id="WP_011818775.1">
    <property type="nucleotide sequence ID" value="NC_008816.1"/>
</dbReference>
<dbReference type="SMR" id="A2BS76"/>
<dbReference type="STRING" id="146891.A9601_13531"/>
<dbReference type="KEGG" id="pmb:A9601_13531"/>
<dbReference type="eggNOG" id="COG3128">
    <property type="taxonomic scope" value="Bacteria"/>
</dbReference>
<dbReference type="HOGENOM" id="CLU_106663_0_0_3"/>
<dbReference type="OrthoDB" id="9812472at2"/>
<dbReference type="Proteomes" id="UP000002590">
    <property type="component" value="Chromosome"/>
</dbReference>
<dbReference type="GO" id="GO:0016706">
    <property type="term" value="F:2-oxoglutarate-dependent dioxygenase activity"/>
    <property type="evidence" value="ECO:0007669"/>
    <property type="project" value="UniProtKB-UniRule"/>
</dbReference>
<dbReference type="GO" id="GO:0005506">
    <property type="term" value="F:iron ion binding"/>
    <property type="evidence" value="ECO:0007669"/>
    <property type="project" value="UniProtKB-UniRule"/>
</dbReference>
<dbReference type="GO" id="GO:0031418">
    <property type="term" value="F:L-ascorbic acid binding"/>
    <property type="evidence" value="ECO:0007669"/>
    <property type="project" value="UniProtKB-KW"/>
</dbReference>
<dbReference type="GO" id="GO:0006974">
    <property type="term" value="P:DNA damage response"/>
    <property type="evidence" value="ECO:0007669"/>
    <property type="project" value="TreeGrafter"/>
</dbReference>
<dbReference type="GO" id="GO:0006879">
    <property type="term" value="P:intracellular iron ion homeostasis"/>
    <property type="evidence" value="ECO:0007669"/>
    <property type="project" value="TreeGrafter"/>
</dbReference>
<dbReference type="Gene3D" id="2.60.120.620">
    <property type="entry name" value="q2cbj1_9rhob like domain"/>
    <property type="match status" value="1"/>
</dbReference>
<dbReference type="Gene3D" id="4.10.860.20">
    <property type="entry name" value="Rabenosyn, Rab binding domain"/>
    <property type="match status" value="1"/>
</dbReference>
<dbReference type="HAMAP" id="MF_00657">
    <property type="entry name" value="Hydroxyl_YbiX"/>
    <property type="match status" value="1"/>
</dbReference>
<dbReference type="InterPro" id="IPR005123">
    <property type="entry name" value="Oxoglu/Fe-dep_dioxygenase_dom"/>
</dbReference>
<dbReference type="InterPro" id="IPR023550">
    <property type="entry name" value="PKHD_hydroxylase"/>
</dbReference>
<dbReference type="InterPro" id="IPR006620">
    <property type="entry name" value="Pro_4_hyd_alph"/>
</dbReference>
<dbReference type="InterPro" id="IPR044862">
    <property type="entry name" value="Pro_4_hyd_alph_FE2OG_OXY"/>
</dbReference>
<dbReference type="NCBIfam" id="NF003974">
    <property type="entry name" value="PRK05467.1-3"/>
    <property type="match status" value="1"/>
</dbReference>
<dbReference type="PANTHER" id="PTHR41536">
    <property type="entry name" value="PKHD-TYPE HYDROXYLASE YBIX"/>
    <property type="match status" value="1"/>
</dbReference>
<dbReference type="PANTHER" id="PTHR41536:SF1">
    <property type="entry name" value="PKHD-TYPE HYDROXYLASE YBIX"/>
    <property type="match status" value="1"/>
</dbReference>
<dbReference type="Pfam" id="PF13640">
    <property type="entry name" value="2OG-FeII_Oxy_3"/>
    <property type="match status" value="1"/>
</dbReference>
<dbReference type="SMART" id="SM00702">
    <property type="entry name" value="P4Hc"/>
    <property type="match status" value="1"/>
</dbReference>
<dbReference type="PROSITE" id="PS51471">
    <property type="entry name" value="FE2OG_OXY"/>
    <property type="match status" value="1"/>
</dbReference>
<protein>
    <recommendedName>
        <fullName evidence="1">PKHD-type hydroxylase A9601_13531</fullName>
        <ecNumber evidence="1">1.14.11.-</ecNumber>
    </recommendedName>
</protein>
<accession>A2BS76</accession>
<comment type="cofactor">
    <cofactor evidence="1">
        <name>Fe(2+)</name>
        <dbReference type="ChEBI" id="CHEBI:29033"/>
    </cofactor>
    <text evidence="1">Binds 1 Fe(2+) ion per subunit.</text>
</comment>
<comment type="cofactor">
    <cofactor evidence="1">
        <name>L-ascorbate</name>
        <dbReference type="ChEBI" id="CHEBI:38290"/>
    </cofactor>
</comment>
<gene>
    <name type="ordered locus">A9601_13531</name>
</gene>